<organism>
    <name type="scientific">African swine fever virus (isolate Pig/Kenya/KEN-50/1950)</name>
    <name type="common">ASFV</name>
    <dbReference type="NCBI Taxonomy" id="561445"/>
    <lineage>
        <taxon>Viruses</taxon>
        <taxon>Varidnaviria</taxon>
        <taxon>Bamfordvirae</taxon>
        <taxon>Nucleocytoviricota</taxon>
        <taxon>Pokkesviricetes</taxon>
        <taxon>Asfuvirales</taxon>
        <taxon>Asfarviridae</taxon>
        <taxon>Asfivirus</taxon>
        <taxon>African swine fever virus</taxon>
    </lineage>
</organism>
<reference key="1">
    <citation type="submission" date="2003-03" db="EMBL/GenBank/DDBJ databases">
        <title>African swine fever virus genomes.</title>
        <authorList>
            <person name="Kutish G.F."/>
            <person name="Rock D.L."/>
        </authorList>
    </citation>
    <scope>NUCLEOTIDE SEQUENCE [LARGE SCALE GENOMIC DNA]</scope>
</reference>
<comment type="function">
    <text evidence="1">Plays a role in virus cell tropism, and may be required for efficient virus replication in macrophages. In addition, inhibits the phosphorylation of host TBK1 and IRF7 and thereby negatively regulates the host cGAS signaling pathway and antagonizes IFN-mediated antiviral activity.</text>
</comment>
<comment type="subunit">
    <text evidence="1">Interacts with host TBK1 ad IRF7.</text>
</comment>
<comment type="similarity">
    <text evidence="2">Belongs to the asfivirus MGF 360 family.</text>
</comment>
<keyword id="KW-0040">ANK repeat</keyword>
<keyword id="KW-0945">Host-virus interaction</keyword>
<keyword id="KW-1090">Inhibition of host innate immune response by virus</keyword>
<keyword id="KW-1093">Inhibition of host IRF7 by virus</keyword>
<keyword id="KW-1113">Inhibition of host RLR pathway by virus</keyword>
<keyword id="KW-1223">Inhibition of host TBK1 by virus</keyword>
<keyword id="KW-1225">Inhibition of host TLR pathway by virus</keyword>
<keyword id="KW-0899">Viral immunoevasion</keyword>
<protein>
    <recommendedName>
        <fullName>Protein MGF 360-11L</fullName>
    </recommendedName>
</protein>
<feature type="chain" id="PRO_0000373277" description="Protein MGF 360-11L">
    <location>
        <begin position="1"/>
        <end position="353"/>
    </location>
</feature>
<feature type="repeat" description="ANK">
    <location>
        <begin position="59"/>
        <end position="88"/>
    </location>
</feature>
<evidence type="ECO:0000250" key="1">
    <source>
        <dbReference type="UniProtKB" id="P0C9P6"/>
    </source>
</evidence>
<evidence type="ECO:0000305" key="2"/>
<name>36011_ASFK5</name>
<dbReference type="EMBL" id="AY261360">
    <property type="status" value="NOT_ANNOTATED_CDS"/>
    <property type="molecule type" value="Genomic_DNA"/>
</dbReference>
<dbReference type="SMR" id="P0C9P7"/>
<dbReference type="Proteomes" id="UP000000861">
    <property type="component" value="Segment"/>
</dbReference>
<dbReference type="GO" id="GO:0039557">
    <property type="term" value="P:symbiont-mediated suppression of host cytoplasmic pattern recognition receptor signaling pathway via inhibition of IRF7 activity"/>
    <property type="evidence" value="ECO:0007669"/>
    <property type="project" value="UniProtKB-KW"/>
</dbReference>
<dbReference type="GO" id="GO:0039723">
    <property type="term" value="P:symbiont-mediated suppression of host cytoplasmic pattern recognition receptor signaling pathway via inhibition of TBK1 activity"/>
    <property type="evidence" value="ECO:0007669"/>
    <property type="project" value="UniProtKB-KW"/>
</dbReference>
<dbReference type="GO" id="GO:0039722">
    <property type="term" value="P:symbiont-mediated suppression of host toll-like receptor signaling pathway"/>
    <property type="evidence" value="ECO:0007669"/>
    <property type="project" value="UniProtKB-KW"/>
</dbReference>
<dbReference type="GO" id="GO:0042330">
    <property type="term" value="P:taxis"/>
    <property type="evidence" value="ECO:0007669"/>
    <property type="project" value="InterPro"/>
</dbReference>
<dbReference type="InterPro" id="IPR002110">
    <property type="entry name" value="Ankyrin_rpt"/>
</dbReference>
<dbReference type="InterPro" id="IPR002595">
    <property type="entry name" value="ASFV_MGF360"/>
</dbReference>
<dbReference type="Pfam" id="PF13606">
    <property type="entry name" value="Ank_3"/>
    <property type="match status" value="1"/>
</dbReference>
<dbReference type="Pfam" id="PF01671">
    <property type="entry name" value="ASFV_360"/>
    <property type="match status" value="1"/>
</dbReference>
<dbReference type="PROSITE" id="PS50297">
    <property type="entry name" value="ANK_REP_REGION"/>
    <property type="match status" value="1"/>
</dbReference>
<dbReference type="PROSITE" id="PS50088">
    <property type="entry name" value="ANK_REPEAT"/>
    <property type="match status" value="1"/>
</dbReference>
<gene>
    <name type="ordered locus">Ken-034</name>
</gene>
<accession>P0C9P7</accession>
<sequence length="353" mass="41776">MLPSLQSLSKKVLAKQCIPVDQYHILKCCGLWWYDGPITFYTYRNKMFIKSTCFSEGIELNTVLMKAAKENNHDLIRLFVEWGADINYGLVCAHSEHTRNLCRELGAKDRLDREYILKIFFDTTRNKTDSNIILCHEMFSNNPNLKHVDDLDLREEIMWELRGLMEITYMLDHDNSFSNMLTKYWYAIAVDYGLKKAIHYFYQKYTHLHRWRLMCALFYNNVFDLHELYEIERVRMDIDEMMHIACIQDYSYSAIYYCFIMGANINQAMFVSIQNYNLGNMFFCIDLGANAFEEGKTLAIQKENYLIADALSLKHYNPVISLLSAVTDPEKINSMLKNYHSKNMVVFLDYERR</sequence>
<organismHost>
    <name type="scientific">Ornithodoros</name>
    <name type="common">relapsing fever ticks</name>
    <dbReference type="NCBI Taxonomy" id="6937"/>
</organismHost>
<organismHost>
    <name type="scientific">Phacochoerus aethiopicus</name>
    <name type="common">Warthog</name>
    <dbReference type="NCBI Taxonomy" id="85517"/>
</organismHost>
<organismHost>
    <name type="scientific">Phacochoerus africanus</name>
    <name type="common">Warthog</name>
    <dbReference type="NCBI Taxonomy" id="41426"/>
</organismHost>
<organismHost>
    <name type="scientific">Potamochoerus larvatus</name>
    <name type="common">Bushpig</name>
    <dbReference type="NCBI Taxonomy" id="273792"/>
</organismHost>
<organismHost>
    <name type="scientific">Sus scrofa</name>
    <name type="common">Pig</name>
    <dbReference type="NCBI Taxonomy" id="9823"/>
</organismHost>
<proteinExistence type="inferred from homology"/>